<accession>A7H563</accession>
<feature type="chain" id="PRO_1000010579" description="Peptidyl-tRNA hydrolase">
    <location>
        <begin position="1"/>
        <end position="181"/>
    </location>
</feature>
<feature type="active site" description="Proton acceptor" evidence="1">
    <location>
        <position position="19"/>
    </location>
</feature>
<feature type="binding site" evidence="1">
    <location>
        <position position="14"/>
    </location>
    <ligand>
        <name>tRNA</name>
        <dbReference type="ChEBI" id="CHEBI:17843"/>
    </ligand>
</feature>
<feature type="binding site" evidence="1">
    <location>
        <position position="62"/>
    </location>
    <ligand>
        <name>tRNA</name>
        <dbReference type="ChEBI" id="CHEBI:17843"/>
    </ligand>
</feature>
<feature type="binding site" evidence="1">
    <location>
        <position position="64"/>
    </location>
    <ligand>
        <name>tRNA</name>
        <dbReference type="ChEBI" id="CHEBI:17843"/>
    </ligand>
</feature>
<feature type="binding site" evidence="1">
    <location>
        <position position="108"/>
    </location>
    <ligand>
        <name>tRNA</name>
        <dbReference type="ChEBI" id="CHEBI:17843"/>
    </ligand>
</feature>
<feature type="site" description="Discriminates between blocked and unblocked aminoacyl-tRNA" evidence="1">
    <location>
        <position position="9"/>
    </location>
</feature>
<feature type="site" description="Stabilizes the basic form of H active site to accept a proton" evidence="1">
    <location>
        <position position="87"/>
    </location>
</feature>
<reference key="1">
    <citation type="submission" date="2007-07" db="EMBL/GenBank/DDBJ databases">
        <title>Complete genome sequence of Campylobacter jejuni subsp doylei 269.97 isolated from human blood.</title>
        <authorList>
            <person name="Fouts D.E."/>
            <person name="Mongodin E.F."/>
            <person name="Puiu D."/>
            <person name="Sebastian Y."/>
            <person name="Miller W.G."/>
            <person name="Mandrell R.E."/>
            <person name="Lastovica A.J."/>
            <person name="Nelson K.E."/>
        </authorList>
    </citation>
    <scope>NUCLEOTIDE SEQUENCE [LARGE SCALE GENOMIC DNA]</scope>
    <source>
        <strain>ATCC BAA-1458 / RM4099 / 269.97</strain>
    </source>
</reference>
<name>PTH_CAMJD</name>
<organism>
    <name type="scientific">Campylobacter jejuni subsp. doylei (strain ATCC BAA-1458 / RM4099 / 269.97)</name>
    <dbReference type="NCBI Taxonomy" id="360109"/>
    <lineage>
        <taxon>Bacteria</taxon>
        <taxon>Pseudomonadati</taxon>
        <taxon>Campylobacterota</taxon>
        <taxon>Epsilonproteobacteria</taxon>
        <taxon>Campylobacterales</taxon>
        <taxon>Campylobacteraceae</taxon>
        <taxon>Campylobacter</taxon>
    </lineage>
</organism>
<proteinExistence type="inferred from homology"/>
<evidence type="ECO:0000255" key="1">
    <source>
        <dbReference type="HAMAP-Rule" id="MF_00083"/>
    </source>
</evidence>
<comment type="function">
    <text evidence="1">Hydrolyzes ribosome-free peptidyl-tRNAs (with 1 or more amino acids incorporated), which drop off the ribosome during protein synthesis, or as a result of ribosome stalling.</text>
</comment>
<comment type="function">
    <text evidence="1">Catalyzes the release of premature peptidyl moieties from peptidyl-tRNA molecules trapped in stalled 50S ribosomal subunits, and thus maintains levels of free tRNAs and 50S ribosomes.</text>
</comment>
<comment type="catalytic activity">
    <reaction evidence="1">
        <text>an N-acyl-L-alpha-aminoacyl-tRNA + H2O = an N-acyl-L-amino acid + a tRNA + H(+)</text>
        <dbReference type="Rhea" id="RHEA:54448"/>
        <dbReference type="Rhea" id="RHEA-COMP:10123"/>
        <dbReference type="Rhea" id="RHEA-COMP:13883"/>
        <dbReference type="ChEBI" id="CHEBI:15377"/>
        <dbReference type="ChEBI" id="CHEBI:15378"/>
        <dbReference type="ChEBI" id="CHEBI:59874"/>
        <dbReference type="ChEBI" id="CHEBI:78442"/>
        <dbReference type="ChEBI" id="CHEBI:138191"/>
        <dbReference type="EC" id="3.1.1.29"/>
    </reaction>
</comment>
<comment type="subunit">
    <text evidence="1">Monomer.</text>
</comment>
<comment type="subcellular location">
    <subcellularLocation>
        <location evidence="1">Cytoplasm</location>
    </subcellularLocation>
</comment>
<comment type="similarity">
    <text evidence="1">Belongs to the PTH family.</text>
</comment>
<protein>
    <recommendedName>
        <fullName evidence="1">Peptidyl-tRNA hydrolase</fullName>
        <shortName evidence="1">Pth</shortName>
        <ecNumber evidence="1">3.1.1.29</ecNumber>
    </recommendedName>
</protein>
<sequence>MILVVGLGNIGVEYENTRHNVGFMLIDLLLKESNFTNLTNSKFKGELFKIGSSLLLLKPSTYMNNSGLSVKAVNDFYKCERMIVIHDDIDINLGALRFKKGGSSGGHNGLKSIDALCGNDYERVRIGVGKGENVISHVLDKFKPEEEITLSKVLEHTKKALLELIEKDDLSAISSKYSLKA</sequence>
<gene>
    <name evidence="1" type="primary">pth</name>
    <name type="ordered locus">JJD26997_1653</name>
</gene>
<dbReference type="EC" id="3.1.1.29" evidence="1"/>
<dbReference type="EMBL" id="CP000768">
    <property type="protein sequence ID" value="ABS44514.1"/>
    <property type="molecule type" value="Genomic_DNA"/>
</dbReference>
<dbReference type="SMR" id="A7H563"/>
<dbReference type="KEGG" id="cjd:JJD26997_1653"/>
<dbReference type="HOGENOM" id="CLU_062456_4_1_7"/>
<dbReference type="Proteomes" id="UP000002302">
    <property type="component" value="Chromosome"/>
</dbReference>
<dbReference type="GO" id="GO:0005737">
    <property type="term" value="C:cytoplasm"/>
    <property type="evidence" value="ECO:0007669"/>
    <property type="project" value="UniProtKB-SubCell"/>
</dbReference>
<dbReference type="GO" id="GO:0004045">
    <property type="term" value="F:peptidyl-tRNA hydrolase activity"/>
    <property type="evidence" value="ECO:0007669"/>
    <property type="project" value="UniProtKB-UniRule"/>
</dbReference>
<dbReference type="GO" id="GO:0000049">
    <property type="term" value="F:tRNA binding"/>
    <property type="evidence" value="ECO:0007669"/>
    <property type="project" value="UniProtKB-UniRule"/>
</dbReference>
<dbReference type="GO" id="GO:0006515">
    <property type="term" value="P:protein quality control for misfolded or incompletely synthesized proteins"/>
    <property type="evidence" value="ECO:0007669"/>
    <property type="project" value="UniProtKB-UniRule"/>
</dbReference>
<dbReference type="GO" id="GO:0072344">
    <property type="term" value="P:rescue of stalled ribosome"/>
    <property type="evidence" value="ECO:0007669"/>
    <property type="project" value="UniProtKB-UniRule"/>
</dbReference>
<dbReference type="CDD" id="cd00462">
    <property type="entry name" value="PTH"/>
    <property type="match status" value="1"/>
</dbReference>
<dbReference type="FunFam" id="3.40.50.1470:FF:000001">
    <property type="entry name" value="Peptidyl-tRNA hydrolase"/>
    <property type="match status" value="1"/>
</dbReference>
<dbReference type="Gene3D" id="3.40.50.1470">
    <property type="entry name" value="Peptidyl-tRNA hydrolase"/>
    <property type="match status" value="1"/>
</dbReference>
<dbReference type="HAMAP" id="MF_00083">
    <property type="entry name" value="Pept_tRNA_hydro_bact"/>
    <property type="match status" value="1"/>
</dbReference>
<dbReference type="InterPro" id="IPR001328">
    <property type="entry name" value="Pept_tRNA_hydro"/>
</dbReference>
<dbReference type="InterPro" id="IPR018171">
    <property type="entry name" value="Pept_tRNA_hydro_CS"/>
</dbReference>
<dbReference type="InterPro" id="IPR036416">
    <property type="entry name" value="Pept_tRNA_hydro_sf"/>
</dbReference>
<dbReference type="NCBIfam" id="TIGR00447">
    <property type="entry name" value="pth"/>
    <property type="match status" value="1"/>
</dbReference>
<dbReference type="PANTHER" id="PTHR17224">
    <property type="entry name" value="PEPTIDYL-TRNA HYDROLASE"/>
    <property type="match status" value="1"/>
</dbReference>
<dbReference type="PANTHER" id="PTHR17224:SF1">
    <property type="entry name" value="PEPTIDYL-TRNA HYDROLASE"/>
    <property type="match status" value="1"/>
</dbReference>
<dbReference type="Pfam" id="PF01195">
    <property type="entry name" value="Pept_tRNA_hydro"/>
    <property type="match status" value="1"/>
</dbReference>
<dbReference type="SUPFAM" id="SSF53178">
    <property type="entry name" value="Peptidyl-tRNA hydrolase-like"/>
    <property type="match status" value="1"/>
</dbReference>
<dbReference type="PROSITE" id="PS01195">
    <property type="entry name" value="PEPT_TRNA_HYDROL_1"/>
    <property type="match status" value="1"/>
</dbReference>
<dbReference type="PROSITE" id="PS01196">
    <property type="entry name" value="PEPT_TRNA_HYDROL_2"/>
    <property type="match status" value="1"/>
</dbReference>
<keyword id="KW-0963">Cytoplasm</keyword>
<keyword id="KW-0378">Hydrolase</keyword>
<keyword id="KW-0694">RNA-binding</keyword>
<keyword id="KW-0820">tRNA-binding</keyword>